<protein>
    <recommendedName>
        <fullName evidence="4">Peptides MS9.1</fullName>
    </recommendedName>
    <component>
        <recommendedName>
            <fullName evidence="3">Tau-AnmTX Ms 9a-1</fullName>
        </recommendedName>
    </component>
    <component>
        <recommendedName>
            <fullName evidence="3">AnmTx Ms 9a-2</fullName>
        </recommendedName>
    </component>
</protein>
<dbReference type="EMBL" id="LT577947">
    <property type="protein sequence ID" value="SBO16028.1"/>
    <property type="molecule type" value="mRNA"/>
</dbReference>
<dbReference type="EMBL" id="LT577948">
    <property type="protein sequence ID" value="SBO16029.1"/>
    <property type="status" value="ALT_FRAME"/>
    <property type="molecule type" value="mRNA"/>
</dbReference>
<dbReference type="GO" id="GO:0005576">
    <property type="term" value="C:extracellular region"/>
    <property type="evidence" value="ECO:0000314"/>
    <property type="project" value="UniProtKB"/>
</dbReference>
<dbReference type="GO" id="GO:0042151">
    <property type="term" value="C:nematocyst"/>
    <property type="evidence" value="ECO:0007669"/>
    <property type="project" value="UniProtKB-SubCell"/>
</dbReference>
<dbReference type="GO" id="GO:0090729">
    <property type="term" value="F:toxin activity"/>
    <property type="evidence" value="ECO:0007669"/>
    <property type="project" value="UniProtKB-KW"/>
</dbReference>
<feature type="signal peptide" evidence="1">
    <location>
        <begin position="1"/>
        <end position="21"/>
    </location>
</feature>
<feature type="propeptide" id="PRO_0000443941" evidence="5">
    <location>
        <begin position="22"/>
        <end position="27"/>
    </location>
</feature>
<feature type="peptide" id="PRO_0000443942" description="Tau-AnmTX Ms 9a-1" evidence="2">
    <location>
        <begin position="28"/>
        <end position="62"/>
    </location>
</feature>
<feature type="propeptide" id="PRO_0000443943" evidence="5">
    <location>
        <begin position="63"/>
        <end position="64"/>
    </location>
</feature>
<feature type="peptide" id="PRO_0000443944" description="AnmTx Ms 9a-2" evidence="3">
    <location>
        <begin position="65"/>
        <end position="91"/>
    </location>
</feature>
<feature type="propeptide" id="PRO_0000443945" evidence="5">
    <location>
        <begin position="92"/>
        <end position="98"/>
    </location>
</feature>
<feature type="disulfide bond" evidence="3">
    <location>
        <begin position="34"/>
        <end position="46"/>
    </location>
</feature>
<feature type="disulfide bond" evidence="3">
    <location>
        <begin position="37"/>
        <end position="52"/>
    </location>
</feature>
<feature type="sequence conflict" description="In Ref. 1; SBO16029." evidence="4" ref="1">
    <original>KQDSS</original>
    <variation>TEDSN</variation>
    <location>
        <begin position="76"/>
        <end position="80"/>
    </location>
</feature>
<accession>A0A1R3S3A8</accession>
<accession>A0A1R3S398</accession>
<accession>C0HK13</accession>
<reference evidence="6" key="1">
    <citation type="journal article" date="2017" name="J. Biol. Chem.">
        <title>Peptide from sea anemone metridium senile affects transient receptor potential ankyrin-repeat 1 (TRPA1) function and produces analgesic effect.</title>
        <authorList>
            <person name="Logashina Y.A."/>
            <person name="Mosharova I.V."/>
            <person name="Korolkova Y.V."/>
            <person name="Shelukhina I.V."/>
            <person name="Dyachenko I.A."/>
            <person name="Palikov V.A."/>
            <person name="Palikova Y.A."/>
            <person name="Murashev A.N."/>
            <person name="Kozlov S.A."/>
            <person name="Stensvaag K."/>
            <person name="Andreev Y.A."/>
        </authorList>
    </citation>
    <scope>NUCLEOTIDE SEQUENCE [MRNA]</scope>
    <scope>PROTEIN SEQUENCE OF 28-61</scope>
    <scope>FUNCTION</scope>
    <scope>SUBCELLULAR LOCATION</scope>
    <scope>MASS SPECTROMETRY</scope>
    <source>
        <tissue evidence="6">Tentacle</tissue>
        <tissue evidence="3">Venom</tissue>
    </source>
</reference>
<sequence>MKQSLILAVLCLALVFATIEAKPKADPNIIVGGCIKCHVKNASGRCVRIVGCGVDKVPDLFSDPNIIVGGCSKCHKQDSSGNCVRIAGCGVDPVRDAE</sequence>
<proteinExistence type="evidence at protein level"/>
<comment type="function">
    <molecule>Tau-AnmTX Ms 9a-1</molecule>
    <text evidence="2">Acts as a positive modulator of mammalian TRPA1, a non-selective cation channel involved in detection of pain, in vitro yet has an analgesic and anti-inflammatory effect in vivo.</text>
</comment>
<comment type="subcellular location">
    <subcellularLocation>
        <location evidence="2">Secreted</location>
    </subcellularLocation>
    <subcellularLocation>
        <location evidence="2">Nematocyst</location>
    </subcellularLocation>
</comment>
<comment type="mass spectrometry">
    <molecule>Tau-AnmTX Ms 9a-1</molecule>
</comment>
<comment type="similarity">
    <text evidence="4">Belongs to the sea anemone BBH family.</text>
</comment>
<comment type="sequence caution" evidence="4">
    <conflict type="frameshift">
        <sequence resource="EMBL-CDS" id="SBO16029"/>
    </conflict>
</comment>
<evidence type="ECO:0000255" key="1"/>
<evidence type="ECO:0000269" key="2">
    <source>
    </source>
</evidence>
<evidence type="ECO:0000303" key="3">
    <source>
    </source>
</evidence>
<evidence type="ECO:0000305" key="4"/>
<evidence type="ECO:0000305" key="5">
    <source>
    </source>
</evidence>
<evidence type="ECO:0000312" key="6">
    <source>
        <dbReference type="EMBL" id="SBO16028.1"/>
    </source>
</evidence>
<organism evidence="6">
    <name type="scientific">Metridium senile</name>
    <name type="common">Brown sea anemone</name>
    <name type="synonym">Frilled sea anemone</name>
    <dbReference type="NCBI Taxonomy" id="6116"/>
    <lineage>
        <taxon>Eukaryota</taxon>
        <taxon>Metazoa</taxon>
        <taxon>Cnidaria</taxon>
        <taxon>Anthozoa</taxon>
        <taxon>Hexacorallia</taxon>
        <taxon>Actiniaria</taxon>
        <taxon>Nynantheae</taxon>
        <taxon>Metridiidae</taxon>
        <taxon>Metridium</taxon>
    </lineage>
</organism>
<name>BBH1O_METSE</name>
<keyword id="KW-0903">Direct protein sequencing</keyword>
<keyword id="KW-1015">Disulfide bond</keyword>
<keyword id="KW-0166">Nematocyst</keyword>
<keyword id="KW-0964">Secreted</keyword>
<keyword id="KW-0732">Signal</keyword>
<keyword id="KW-0800">Toxin</keyword>